<proteinExistence type="evidence at transcript level"/>
<gene>
    <name evidence="14" type="primary">S100pbp</name>
</gene>
<sequence length="396" mass="44473">MTCSLLPSEQSSGASFLPKSNASFPWGSLDEDELDDSLLEFSDGEEDDGHFSFTEEEIEMLLKDDDGGHNEYRPRKSQILPDIPQENSLYSLGPAAETPGFLKLPQLSTSVGHGPTPSKSLNRHFVLEKNLIKVTVVAPFNPTVCDPVLDKDKIDSSKETENPASLREQTREDDPQPNESKRCTEPEGVSPNTSAWDGPLLSSPSNNNIEQTASDKNIPESKKPTPVFSQISNHSEVPNRKNSGSHKSGCEVRIPVVSSSSNRHAFDKDSGEAKGERRLGKVIPVLQTRTRMFSQSELEKQKDIYLSKVIAHIEDPGDSNQGTLGELDALMDQVHMQHPDWQHPSDLTTRNYARFRQRPLQRYSLSQWVDRNKRSHHRFQRLPDFSYSPYVSSHQQ</sequence>
<dbReference type="EMBL" id="AK015229">
    <property type="protein sequence ID" value="BAB29757.1"/>
    <property type="molecule type" value="mRNA"/>
</dbReference>
<dbReference type="EMBL" id="AK030636">
    <property type="protein sequence ID" value="BAC27057.1"/>
    <property type="molecule type" value="mRNA"/>
</dbReference>
<dbReference type="EMBL" id="AK043160">
    <property type="protein sequence ID" value="BAC31481.1"/>
    <property type="molecule type" value="mRNA"/>
</dbReference>
<dbReference type="EMBL" id="AK046756">
    <property type="protein sequence ID" value="BAE20659.1"/>
    <property type="molecule type" value="mRNA"/>
</dbReference>
<dbReference type="EMBL" id="AK139097">
    <property type="protein sequence ID" value="BAE23889.1"/>
    <property type="molecule type" value="mRNA"/>
</dbReference>
<dbReference type="EMBL" id="AK146310">
    <property type="protein sequence ID" value="BAE27065.1"/>
    <property type="molecule type" value="mRNA"/>
</dbReference>
<dbReference type="EMBL" id="AL606977">
    <property type="status" value="NOT_ANNOTATED_CDS"/>
    <property type="molecule type" value="Genomic_DNA"/>
</dbReference>
<dbReference type="EMBL" id="BC038329">
    <property type="protein sequence ID" value="AAH38329.1"/>
    <property type="molecule type" value="mRNA"/>
</dbReference>
<dbReference type="CCDS" id="CCDS18684.1">
    <molecule id="Q9D5K4-1"/>
</dbReference>
<dbReference type="CCDS" id="CCDS84797.1">
    <molecule id="Q9D5K4-4"/>
</dbReference>
<dbReference type="CCDS" id="CCDS89830.1">
    <molecule id="Q9D5K4-3"/>
</dbReference>
<dbReference type="RefSeq" id="NP_001334132.1">
    <molecule id="Q9D5K4-4"/>
    <property type="nucleotide sequence ID" value="NM_001347203.2"/>
</dbReference>
<dbReference type="RefSeq" id="NP_001348246.1">
    <molecule id="Q9D5K4-3"/>
    <property type="nucleotide sequence ID" value="NM_001361317.2"/>
</dbReference>
<dbReference type="RefSeq" id="NP_001366517.1">
    <molecule id="Q9D5K4-1"/>
    <property type="nucleotide sequence ID" value="NM_001379588.1"/>
</dbReference>
<dbReference type="RefSeq" id="NP_001366518.1">
    <molecule id="Q9D5K4-1"/>
    <property type="nucleotide sequence ID" value="NM_001379589.1"/>
</dbReference>
<dbReference type="RefSeq" id="NP_001366519.1">
    <molecule id="Q9D5K4-1"/>
    <property type="nucleotide sequence ID" value="NM_001379590.1"/>
</dbReference>
<dbReference type="RefSeq" id="NP_001366520.1">
    <molecule id="Q9D5K4-1"/>
    <property type="nucleotide sequence ID" value="NM_001379591.1"/>
</dbReference>
<dbReference type="RefSeq" id="NP_001366521.1">
    <molecule id="Q9D5K4-1"/>
    <property type="nucleotide sequence ID" value="NM_001379592.1"/>
</dbReference>
<dbReference type="RefSeq" id="NP_001366522.1">
    <molecule id="Q9D5K4-4"/>
    <property type="nucleotide sequence ID" value="NM_001379593.1"/>
</dbReference>
<dbReference type="RefSeq" id="NP_001366523.1">
    <molecule id="Q9D5K4-4"/>
    <property type="nucleotide sequence ID" value="NM_001379594.1"/>
</dbReference>
<dbReference type="RefSeq" id="NP_001366524.1">
    <molecule id="Q9D5K4-3"/>
    <property type="nucleotide sequence ID" value="NM_001379595.1"/>
</dbReference>
<dbReference type="RefSeq" id="NP_083312.1">
    <molecule id="Q9D5K4-1"/>
    <property type="nucleotide sequence ID" value="NM_029036.4"/>
</dbReference>
<dbReference type="RefSeq" id="XP_006503508.1">
    <property type="nucleotide sequence ID" value="XM_006503445.3"/>
</dbReference>
<dbReference type="RefSeq" id="XP_006503509.1">
    <molecule id="Q9D5K4-1"/>
    <property type="nucleotide sequence ID" value="XM_006503446.5"/>
</dbReference>
<dbReference type="RefSeq" id="XP_006503511.1">
    <molecule id="Q9D5K4-1"/>
    <property type="nucleotide sequence ID" value="XM_006503448.4"/>
</dbReference>
<dbReference type="RefSeq" id="XP_006503512.1">
    <property type="nucleotide sequence ID" value="XM_006503449.3"/>
</dbReference>
<dbReference type="RefSeq" id="XP_011238925.1">
    <property type="nucleotide sequence ID" value="XM_011240623.2"/>
</dbReference>
<dbReference type="RefSeq" id="XP_036020399.1">
    <molecule id="Q9D5K4-3"/>
    <property type="nucleotide sequence ID" value="XM_036164506.1"/>
</dbReference>
<dbReference type="RefSeq" id="XP_036020400.1">
    <molecule id="Q9D5K4-3"/>
    <property type="nucleotide sequence ID" value="XM_036164507.1"/>
</dbReference>
<dbReference type="FunCoup" id="Q9D5K4">
    <property type="interactions" value="3742"/>
</dbReference>
<dbReference type="STRING" id="10090.ENSMUSP00000101676"/>
<dbReference type="GlyGen" id="Q9D5K4">
    <property type="glycosylation" value="1 site"/>
</dbReference>
<dbReference type="iPTMnet" id="Q9D5K4"/>
<dbReference type="PhosphoSitePlus" id="Q9D5K4"/>
<dbReference type="PaxDb" id="10090-ENSMUSP00000101676"/>
<dbReference type="PeptideAtlas" id="Q9D5K4"/>
<dbReference type="ProteomicsDB" id="260877">
    <molecule id="Q9D5K4-1"/>
</dbReference>
<dbReference type="ProteomicsDB" id="260878">
    <molecule id="Q9D5K4-2"/>
</dbReference>
<dbReference type="ProteomicsDB" id="260879">
    <molecule id="Q9D5K4-3"/>
</dbReference>
<dbReference type="ProteomicsDB" id="260880">
    <molecule id="Q9D5K4-4"/>
</dbReference>
<dbReference type="ProteomicsDB" id="260881">
    <molecule id="Q9D5K4-5"/>
</dbReference>
<dbReference type="Antibodypedia" id="31365">
    <property type="antibodies" value="109 antibodies from 19 providers"/>
</dbReference>
<dbReference type="DNASU" id="74648"/>
<dbReference type="Ensembl" id="ENSMUST00000049081.12">
    <molecule id="Q9D5K4-1"/>
    <property type="protein sequence ID" value="ENSMUSP00000039820.6"/>
    <property type="gene ID" value="ENSMUSG00000040928.16"/>
</dbReference>
<dbReference type="Ensembl" id="ENSMUST00000072431.13">
    <molecule id="Q9D5K4-3"/>
    <property type="protein sequence ID" value="ENSMUSP00000072258.7"/>
    <property type="gene ID" value="ENSMUSG00000040928.16"/>
</dbReference>
<dbReference type="Ensembl" id="ENSMUST00000106059.8">
    <molecule id="Q9D5K4-4"/>
    <property type="protein sequence ID" value="ENSMUSP00000101674.2"/>
    <property type="gene ID" value="ENSMUSG00000040928.16"/>
</dbReference>
<dbReference type="Ensembl" id="ENSMUST00000106061.9">
    <molecule id="Q9D5K4-1"/>
    <property type="protein sequence ID" value="ENSMUSP00000101676.3"/>
    <property type="gene ID" value="ENSMUSG00000040928.16"/>
</dbReference>
<dbReference type="Ensembl" id="ENSMUST00000117350.2">
    <molecule id="Q9D5K4-2"/>
    <property type="protein sequence ID" value="ENSMUSP00000113214.2"/>
    <property type="gene ID" value="ENSMUSG00000040928.16"/>
</dbReference>
<dbReference type="GeneID" id="74648"/>
<dbReference type="KEGG" id="mmu:74648"/>
<dbReference type="UCSC" id="uc008uwf.1">
    <molecule id="Q9D5K4-1"/>
    <property type="organism name" value="mouse"/>
</dbReference>
<dbReference type="UCSC" id="uc008uwg.1">
    <molecule id="Q9D5K4-4"/>
    <property type="organism name" value="mouse"/>
</dbReference>
<dbReference type="UCSC" id="uc008uwh.1">
    <molecule id="Q9D5K4-3"/>
    <property type="organism name" value="mouse"/>
</dbReference>
<dbReference type="UCSC" id="uc008uwj.1">
    <molecule id="Q9D5K4-2"/>
    <property type="organism name" value="mouse"/>
</dbReference>
<dbReference type="AGR" id="MGI:1921898"/>
<dbReference type="CTD" id="64766"/>
<dbReference type="MGI" id="MGI:1921898">
    <property type="gene designation" value="S100pbp"/>
</dbReference>
<dbReference type="VEuPathDB" id="HostDB:ENSMUSG00000040928"/>
<dbReference type="eggNOG" id="ENOG502S5YT">
    <property type="taxonomic scope" value="Eukaryota"/>
</dbReference>
<dbReference type="GeneTree" id="ENSGT00390000007209"/>
<dbReference type="HOGENOM" id="CLU_064425_0_0_1"/>
<dbReference type="InParanoid" id="Q9D5K4"/>
<dbReference type="OMA" id="HHMQNSK"/>
<dbReference type="OrthoDB" id="8945510at2759"/>
<dbReference type="PhylomeDB" id="Q9D5K4"/>
<dbReference type="TreeFam" id="TF337946"/>
<dbReference type="BioGRID-ORCS" id="74648">
    <property type="hits" value="7 hits in 78 CRISPR screens"/>
</dbReference>
<dbReference type="ChiTaRS" id="S100pbp">
    <property type="organism name" value="mouse"/>
</dbReference>
<dbReference type="PRO" id="PR:Q9D5K4"/>
<dbReference type="Proteomes" id="UP000000589">
    <property type="component" value="Chromosome 4"/>
</dbReference>
<dbReference type="RNAct" id="Q9D5K4">
    <property type="molecule type" value="protein"/>
</dbReference>
<dbReference type="Bgee" id="ENSMUSG00000040928">
    <property type="expression patterns" value="Expressed in embryonic post-anal tail and 243 other cell types or tissues"/>
</dbReference>
<dbReference type="ExpressionAtlas" id="Q9D5K4">
    <property type="expression patterns" value="baseline and differential"/>
</dbReference>
<dbReference type="GO" id="GO:0005829">
    <property type="term" value="C:cytosol"/>
    <property type="evidence" value="ECO:0007669"/>
    <property type="project" value="Ensembl"/>
</dbReference>
<dbReference type="GO" id="GO:0016607">
    <property type="term" value="C:nuclear speck"/>
    <property type="evidence" value="ECO:0007669"/>
    <property type="project" value="Ensembl"/>
</dbReference>
<dbReference type="GO" id="GO:0048306">
    <property type="term" value="F:calcium-dependent protein binding"/>
    <property type="evidence" value="ECO:0007669"/>
    <property type="project" value="Ensembl"/>
</dbReference>
<dbReference type="InterPro" id="IPR026097">
    <property type="entry name" value="S100PBP"/>
</dbReference>
<dbReference type="PANTHER" id="PTHR14455">
    <property type="entry name" value="ASKOPOS"/>
    <property type="match status" value="1"/>
</dbReference>
<dbReference type="PANTHER" id="PTHR14455:SF0">
    <property type="entry name" value="S100P-BINDING PROTEIN"/>
    <property type="match status" value="1"/>
</dbReference>
<dbReference type="Pfam" id="PF15427">
    <property type="entry name" value="S100PBPR"/>
    <property type="match status" value="1"/>
</dbReference>
<accession>Q9D5K4</accession>
<accession>A2A7S5</accession>
<accession>Q3UJU0</accession>
<accession>Q3UTU1</accession>
<accession>Q3V367</accession>
<accession>Q8BSS8</accession>
<accession>Q8C925</accession>
<accession>Q8CHX8</accession>
<reference evidence="7 9" key="1">
    <citation type="journal article" date="2005" name="Science">
        <title>The transcriptional landscape of the mammalian genome.</title>
        <authorList>
            <person name="Carninci P."/>
            <person name="Kasukawa T."/>
            <person name="Katayama S."/>
            <person name="Gough J."/>
            <person name="Frith M.C."/>
            <person name="Maeda N."/>
            <person name="Oyama R."/>
            <person name="Ravasi T."/>
            <person name="Lenhard B."/>
            <person name="Wells C."/>
            <person name="Kodzius R."/>
            <person name="Shimokawa K."/>
            <person name="Bajic V.B."/>
            <person name="Brenner S.E."/>
            <person name="Batalov S."/>
            <person name="Forrest A.R."/>
            <person name="Zavolan M."/>
            <person name="Davis M.J."/>
            <person name="Wilming L.G."/>
            <person name="Aidinis V."/>
            <person name="Allen J.E."/>
            <person name="Ambesi-Impiombato A."/>
            <person name="Apweiler R."/>
            <person name="Aturaliya R.N."/>
            <person name="Bailey T.L."/>
            <person name="Bansal M."/>
            <person name="Baxter L."/>
            <person name="Beisel K.W."/>
            <person name="Bersano T."/>
            <person name="Bono H."/>
            <person name="Chalk A.M."/>
            <person name="Chiu K.P."/>
            <person name="Choudhary V."/>
            <person name="Christoffels A."/>
            <person name="Clutterbuck D.R."/>
            <person name="Crowe M.L."/>
            <person name="Dalla E."/>
            <person name="Dalrymple B.P."/>
            <person name="de Bono B."/>
            <person name="Della Gatta G."/>
            <person name="di Bernardo D."/>
            <person name="Down T."/>
            <person name="Engstrom P."/>
            <person name="Fagiolini M."/>
            <person name="Faulkner G."/>
            <person name="Fletcher C.F."/>
            <person name="Fukushima T."/>
            <person name="Furuno M."/>
            <person name="Futaki S."/>
            <person name="Gariboldi M."/>
            <person name="Georgii-Hemming P."/>
            <person name="Gingeras T.R."/>
            <person name="Gojobori T."/>
            <person name="Green R.E."/>
            <person name="Gustincich S."/>
            <person name="Harbers M."/>
            <person name="Hayashi Y."/>
            <person name="Hensch T.K."/>
            <person name="Hirokawa N."/>
            <person name="Hill D."/>
            <person name="Huminiecki L."/>
            <person name="Iacono M."/>
            <person name="Ikeo K."/>
            <person name="Iwama A."/>
            <person name="Ishikawa T."/>
            <person name="Jakt M."/>
            <person name="Kanapin A."/>
            <person name="Katoh M."/>
            <person name="Kawasawa Y."/>
            <person name="Kelso J."/>
            <person name="Kitamura H."/>
            <person name="Kitano H."/>
            <person name="Kollias G."/>
            <person name="Krishnan S.P."/>
            <person name="Kruger A."/>
            <person name="Kummerfeld S.K."/>
            <person name="Kurochkin I.V."/>
            <person name="Lareau L.F."/>
            <person name="Lazarevic D."/>
            <person name="Lipovich L."/>
            <person name="Liu J."/>
            <person name="Liuni S."/>
            <person name="McWilliam S."/>
            <person name="Madan Babu M."/>
            <person name="Madera M."/>
            <person name="Marchionni L."/>
            <person name="Matsuda H."/>
            <person name="Matsuzawa S."/>
            <person name="Miki H."/>
            <person name="Mignone F."/>
            <person name="Miyake S."/>
            <person name="Morris K."/>
            <person name="Mottagui-Tabar S."/>
            <person name="Mulder N."/>
            <person name="Nakano N."/>
            <person name="Nakauchi H."/>
            <person name="Ng P."/>
            <person name="Nilsson R."/>
            <person name="Nishiguchi S."/>
            <person name="Nishikawa S."/>
            <person name="Nori F."/>
            <person name="Ohara O."/>
            <person name="Okazaki Y."/>
            <person name="Orlando V."/>
            <person name="Pang K.C."/>
            <person name="Pavan W.J."/>
            <person name="Pavesi G."/>
            <person name="Pesole G."/>
            <person name="Petrovsky N."/>
            <person name="Piazza S."/>
            <person name="Reed J."/>
            <person name="Reid J.F."/>
            <person name="Ring B.Z."/>
            <person name="Ringwald M."/>
            <person name="Rost B."/>
            <person name="Ruan Y."/>
            <person name="Salzberg S.L."/>
            <person name="Sandelin A."/>
            <person name="Schneider C."/>
            <person name="Schoenbach C."/>
            <person name="Sekiguchi K."/>
            <person name="Semple C.A."/>
            <person name="Seno S."/>
            <person name="Sessa L."/>
            <person name="Sheng Y."/>
            <person name="Shibata Y."/>
            <person name="Shimada H."/>
            <person name="Shimada K."/>
            <person name="Silva D."/>
            <person name="Sinclair B."/>
            <person name="Sperling S."/>
            <person name="Stupka E."/>
            <person name="Sugiura K."/>
            <person name="Sultana R."/>
            <person name="Takenaka Y."/>
            <person name="Taki K."/>
            <person name="Tammoja K."/>
            <person name="Tan S.L."/>
            <person name="Tang S."/>
            <person name="Taylor M.S."/>
            <person name="Tegner J."/>
            <person name="Teichmann S.A."/>
            <person name="Ueda H.R."/>
            <person name="van Nimwegen E."/>
            <person name="Verardo R."/>
            <person name="Wei C.L."/>
            <person name="Yagi K."/>
            <person name="Yamanishi H."/>
            <person name="Zabarovsky E."/>
            <person name="Zhu S."/>
            <person name="Zimmer A."/>
            <person name="Hide W."/>
            <person name="Bult C."/>
            <person name="Grimmond S.M."/>
            <person name="Teasdale R.D."/>
            <person name="Liu E.T."/>
            <person name="Brusic V."/>
            <person name="Quackenbush J."/>
            <person name="Wahlestedt C."/>
            <person name="Mattick J.S."/>
            <person name="Hume D.A."/>
            <person name="Kai C."/>
            <person name="Sasaki D."/>
            <person name="Tomaru Y."/>
            <person name="Fukuda S."/>
            <person name="Kanamori-Katayama M."/>
            <person name="Suzuki M."/>
            <person name="Aoki J."/>
            <person name="Arakawa T."/>
            <person name="Iida J."/>
            <person name="Imamura K."/>
            <person name="Itoh M."/>
            <person name="Kato T."/>
            <person name="Kawaji H."/>
            <person name="Kawagashira N."/>
            <person name="Kawashima T."/>
            <person name="Kojima M."/>
            <person name="Kondo S."/>
            <person name="Konno H."/>
            <person name="Nakano K."/>
            <person name="Ninomiya N."/>
            <person name="Nishio T."/>
            <person name="Okada M."/>
            <person name="Plessy C."/>
            <person name="Shibata K."/>
            <person name="Shiraki T."/>
            <person name="Suzuki S."/>
            <person name="Tagami M."/>
            <person name="Waki K."/>
            <person name="Watahiki A."/>
            <person name="Okamura-Oho Y."/>
            <person name="Suzuki H."/>
            <person name="Kawai J."/>
            <person name="Hayashizaki Y."/>
        </authorList>
    </citation>
    <scope>NUCLEOTIDE SEQUENCE [LARGE SCALE MRNA] (ISOFORMS 1; 2; 3 AND 5)</scope>
    <source>
        <strain evidence="9">C57BL/6J</strain>
        <strain evidence="13">DBA/2J</strain>
        <tissue evidence="12">Cerebellum</tissue>
        <tissue evidence="10">Pituitary</tissue>
        <tissue evidence="9">Testis</tissue>
        <tissue evidence="11">Thymus</tissue>
    </source>
</reference>
<reference key="2">
    <citation type="journal article" date="2009" name="PLoS Biol.">
        <title>Lineage-specific biology revealed by a finished genome assembly of the mouse.</title>
        <authorList>
            <person name="Church D.M."/>
            <person name="Goodstadt L."/>
            <person name="Hillier L.W."/>
            <person name="Zody M.C."/>
            <person name="Goldstein S."/>
            <person name="She X."/>
            <person name="Bult C.J."/>
            <person name="Agarwala R."/>
            <person name="Cherry J.L."/>
            <person name="DiCuccio M."/>
            <person name="Hlavina W."/>
            <person name="Kapustin Y."/>
            <person name="Meric P."/>
            <person name="Maglott D."/>
            <person name="Birtle Z."/>
            <person name="Marques A.C."/>
            <person name="Graves T."/>
            <person name="Zhou S."/>
            <person name="Teague B."/>
            <person name="Potamousis K."/>
            <person name="Churas C."/>
            <person name="Place M."/>
            <person name="Herschleb J."/>
            <person name="Runnheim R."/>
            <person name="Forrest D."/>
            <person name="Amos-Landgraf J."/>
            <person name="Schwartz D.C."/>
            <person name="Cheng Z."/>
            <person name="Lindblad-Toh K."/>
            <person name="Eichler E.E."/>
            <person name="Ponting C.P."/>
        </authorList>
    </citation>
    <scope>NUCLEOTIDE SEQUENCE [LARGE SCALE GENOMIC DNA]</scope>
    <source>
        <strain>C57BL/6J</strain>
    </source>
</reference>
<reference evidence="7 8" key="3">
    <citation type="journal article" date="2004" name="Genome Res.">
        <title>The status, quality, and expansion of the NIH full-length cDNA project: the Mammalian Gene Collection (MGC).</title>
        <authorList>
            <consortium name="The MGC Project Team"/>
        </authorList>
    </citation>
    <scope>NUCLEOTIDE SEQUENCE [LARGE SCALE MRNA] (ISOFORM 4)</scope>
    <source>
        <tissue evidence="8">Mammary gland</tissue>
    </source>
</reference>
<organism>
    <name type="scientific">Mus musculus</name>
    <name type="common">Mouse</name>
    <dbReference type="NCBI Taxonomy" id="10090"/>
    <lineage>
        <taxon>Eukaryota</taxon>
        <taxon>Metazoa</taxon>
        <taxon>Chordata</taxon>
        <taxon>Craniata</taxon>
        <taxon>Vertebrata</taxon>
        <taxon>Euteleostomi</taxon>
        <taxon>Mammalia</taxon>
        <taxon>Eutheria</taxon>
        <taxon>Euarchontoglires</taxon>
        <taxon>Glires</taxon>
        <taxon>Rodentia</taxon>
        <taxon>Myomorpha</taxon>
        <taxon>Muroidea</taxon>
        <taxon>Muridae</taxon>
        <taxon>Murinae</taxon>
        <taxon>Mus</taxon>
        <taxon>Mus</taxon>
    </lineage>
</organism>
<name>S1PBP_MOUSE</name>
<comment type="subunit">
    <text evidence="1">Interacts with S100P.</text>
</comment>
<comment type="subcellular location">
    <subcellularLocation>
        <location evidence="1">Nucleus</location>
    </subcellularLocation>
    <text evidence="1">Colocalizes with S100P in the nucleus.</text>
</comment>
<comment type="alternative products">
    <event type="alternative splicing"/>
    <isoform>
        <id>Q9D5K4-1</id>
        <name evidence="4">1</name>
        <sequence type="displayed"/>
    </isoform>
    <isoform>
        <id>Q9D5K4-2</id>
        <name evidence="4">2</name>
        <sequence type="described" ref="VSP_052667 VSP_052668"/>
    </isoform>
    <isoform>
        <id>Q9D5K4-3</id>
        <name evidence="4">3</name>
        <sequence type="described" ref="VSP_052663 VSP_052664"/>
    </isoform>
    <isoform>
        <id>Q9D5K4-4</id>
        <name evidence="3">4</name>
        <sequence type="described" ref="VSP_052662 VSP_052664"/>
    </isoform>
    <isoform>
        <id>Q9D5K4-5</id>
        <name evidence="4">5</name>
        <sequence type="described" ref="VSP_052663 VSP_052664 VSP_052665 VSP_052666"/>
    </isoform>
</comment>
<feature type="chain" id="PRO_0000317052" description="S100P-binding protein">
    <location>
        <begin position="1"/>
        <end position="396"/>
    </location>
</feature>
<feature type="region of interest" description="Disordered" evidence="2">
    <location>
        <begin position="145"/>
        <end position="249"/>
    </location>
</feature>
<feature type="compositionally biased region" description="Basic and acidic residues" evidence="2">
    <location>
        <begin position="148"/>
        <end position="161"/>
    </location>
</feature>
<feature type="compositionally biased region" description="Basic and acidic residues" evidence="2">
    <location>
        <begin position="168"/>
        <end position="185"/>
    </location>
</feature>
<feature type="compositionally biased region" description="Polar residues" evidence="2">
    <location>
        <begin position="202"/>
        <end position="215"/>
    </location>
</feature>
<feature type="compositionally biased region" description="Polar residues" evidence="2">
    <location>
        <begin position="227"/>
        <end position="246"/>
    </location>
</feature>
<feature type="splice variant" id="VSP_052662" description="In isoform 4." evidence="5">
    <location>
        <begin position="67"/>
        <end position="143"/>
    </location>
</feature>
<feature type="splice variant" id="VSP_052663" description="In isoform 3 and isoform 5." evidence="6">
    <original>STSVGHGPTPSKSLNRHFVLEKNLIKVTVVAPFNPTV</original>
    <variation>I</variation>
    <location>
        <begin position="108"/>
        <end position="144"/>
    </location>
</feature>
<feature type="splice variant" id="VSP_052664" description="In isoform 3, isoform 4 and isoform 5." evidence="5 6">
    <location>
        <begin position="189"/>
        <end position="230"/>
    </location>
</feature>
<feature type="splice variant" id="VSP_052665" description="In isoform 5." evidence="6">
    <original>HAFDKDSGEAKGERRLGKVIPVLQTRT</original>
    <variation>VSTFFQDIVERKLFSFRKNSYVLNFHI</variation>
    <location>
        <begin position="264"/>
        <end position="290"/>
    </location>
</feature>
<feature type="splice variant" id="VSP_052666" description="In isoform 5." evidence="6">
    <location>
        <begin position="291"/>
        <end position="396"/>
    </location>
</feature>
<feature type="splice variant" id="VSP_052667" description="In isoform 2." evidence="6">
    <original>TLGELDALMDQVHMQHPDWQHPSDLTTRNYARFRQRPLQRYSLSQWVDR</original>
    <variation>NMATKEWLIKHGFRHFLSMIMSLNWDVLNFLKLMKKKTSLSKDLFRRVL</variation>
    <location>
        <begin position="323"/>
        <end position="371"/>
    </location>
</feature>
<feature type="splice variant" id="VSP_052668" description="In isoform 2." evidence="6">
    <location>
        <begin position="372"/>
        <end position="396"/>
    </location>
</feature>
<feature type="sequence conflict" description="In Ref. 1; BAE27065." evidence="7" ref="1">
    <original>E</original>
    <variation>K</variation>
    <location>
        <position position="97"/>
    </location>
</feature>
<feature type="sequence conflict" description="In Ref. 1; BAE20659." evidence="7" ref="1">
    <original>N</original>
    <variation>K</variation>
    <location>
        <position position="262"/>
    </location>
</feature>
<feature type="sequence conflict" description="In Ref. 1; BAC27057." evidence="7" ref="1">
    <original>A</original>
    <variation>V</variation>
    <location>
        <position position="265"/>
    </location>
</feature>
<evidence type="ECO:0000250" key="1">
    <source>
        <dbReference type="UniProtKB" id="Q96BU1"/>
    </source>
</evidence>
<evidence type="ECO:0000256" key="2">
    <source>
        <dbReference type="SAM" id="MobiDB-lite"/>
    </source>
</evidence>
<evidence type="ECO:0000269" key="3">
    <source>
    </source>
</evidence>
<evidence type="ECO:0000269" key="4">
    <source>
    </source>
</evidence>
<evidence type="ECO:0000303" key="5">
    <source>
    </source>
</evidence>
<evidence type="ECO:0000303" key="6">
    <source>
    </source>
</evidence>
<evidence type="ECO:0000305" key="7"/>
<evidence type="ECO:0000312" key="8">
    <source>
        <dbReference type="EMBL" id="AAH38329.1"/>
    </source>
</evidence>
<evidence type="ECO:0000312" key="9">
    <source>
        <dbReference type="EMBL" id="BAB29757.1"/>
    </source>
</evidence>
<evidence type="ECO:0000312" key="10">
    <source>
        <dbReference type="EMBL" id="BAC27057.1"/>
    </source>
</evidence>
<evidence type="ECO:0000312" key="11">
    <source>
        <dbReference type="EMBL" id="BAE20659.1"/>
    </source>
</evidence>
<evidence type="ECO:0000312" key="12">
    <source>
        <dbReference type="EMBL" id="BAE23889.1"/>
    </source>
</evidence>
<evidence type="ECO:0000312" key="13">
    <source>
        <dbReference type="EMBL" id="BAE27065.1"/>
    </source>
</evidence>
<evidence type="ECO:0000312" key="14">
    <source>
        <dbReference type="MGI" id="MGI:1921898"/>
    </source>
</evidence>
<keyword id="KW-0025">Alternative splicing</keyword>
<keyword id="KW-0539">Nucleus</keyword>
<keyword id="KW-1185">Reference proteome</keyword>
<protein>
    <recommendedName>
        <fullName>S100P-binding protein</fullName>
    </recommendedName>
</protein>